<protein>
    <recommendedName>
        <fullName evidence="1">Chorismate pyruvate-lyase</fullName>
        <shortName evidence="1">CL</shortName>
        <shortName evidence="1">CPL</shortName>
        <ecNumber evidence="1">4.1.3.40</ecNumber>
    </recommendedName>
</protein>
<organism>
    <name type="scientific">Pectobacterium carotovorum subsp. carotovorum (strain PC1)</name>
    <dbReference type="NCBI Taxonomy" id="561230"/>
    <lineage>
        <taxon>Bacteria</taxon>
        <taxon>Pseudomonadati</taxon>
        <taxon>Pseudomonadota</taxon>
        <taxon>Gammaproteobacteria</taxon>
        <taxon>Enterobacterales</taxon>
        <taxon>Pectobacteriaceae</taxon>
        <taxon>Pectobacterium</taxon>
    </lineage>
</organism>
<reference key="1">
    <citation type="submission" date="2009-07" db="EMBL/GenBank/DDBJ databases">
        <title>Complete sequence of Pectobacterium carotovorum subsp. carotovorum PC1.</title>
        <authorList>
            <consortium name="US DOE Joint Genome Institute"/>
            <person name="Lucas S."/>
            <person name="Copeland A."/>
            <person name="Lapidus A."/>
            <person name="Glavina del Rio T."/>
            <person name="Tice H."/>
            <person name="Bruce D."/>
            <person name="Goodwin L."/>
            <person name="Pitluck S."/>
            <person name="Munk A.C."/>
            <person name="Brettin T."/>
            <person name="Detter J.C."/>
            <person name="Han C."/>
            <person name="Tapia R."/>
            <person name="Larimer F."/>
            <person name="Land M."/>
            <person name="Hauser L."/>
            <person name="Kyrpides N."/>
            <person name="Mikhailova N."/>
            <person name="Balakrishnan V."/>
            <person name="Glasner J."/>
            <person name="Perna N.T."/>
        </authorList>
    </citation>
    <scope>NUCLEOTIDE SEQUENCE [LARGE SCALE GENOMIC DNA]</scope>
    <source>
        <strain>PC1</strain>
    </source>
</reference>
<keyword id="KW-0963">Cytoplasm</keyword>
<keyword id="KW-0456">Lyase</keyword>
<keyword id="KW-0670">Pyruvate</keyword>
<keyword id="KW-0831">Ubiquinone biosynthesis</keyword>
<gene>
    <name evidence="1" type="primary">ubiC</name>
    <name type="ordered locus">PC1_0510</name>
</gene>
<proteinExistence type="inferred from homology"/>
<accession>C6DKC8</accession>
<sequence length="177" mass="20325">MSDDVSTLLRTISWFAEPPSVLPEHIGDWLMETSSMTQRLEKYCAQLTVTLCREGFVSPQSLGEESEQLPPDERYWLREVVLYGDERPWLFGRTIVPQQTLDGTDSALTKIGNQPLGRYLFEQKSLTRDYIHTGCCEGLWARRSRLCLSGFPLLLTELFLPESPVYYTPSDEGWQVI</sequence>
<dbReference type="EC" id="4.1.3.40" evidence="1"/>
<dbReference type="EMBL" id="CP001657">
    <property type="protein sequence ID" value="ACT11565.1"/>
    <property type="molecule type" value="Genomic_DNA"/>
</dbReference>
<dbReference type="RefSeq" id="WP_012773218.1">
    <property type="nucleotide sequence ID" value="NC_012917.1"/>
</dbReference>
<dbReference type="SMR" id="C6DKC8"/>
<dbReference type="STRING" id="561230.PC1_0510"/>
<dbReference type="GeneID" id="67795655"/>
<dbReference type="KEGG" id="pct:PC1_0510"/>
<dbReference type="eggNOG" id="COG3161">
    <property type="taxonomic scope" value="Bacteria"/>
</dbReference>
<dbReference type="HOGENOM" id="CLU_096824_1_0_6"/>
<dbReference type="OrthoDB" id="9789493at2"/>
<dbReference type="UniPathway" id="UPA00232"/>
<dbReference type="Proteomes" id="UP000002736">
    <property type="component" value="Chromosome"/>
</dbReference>
<dbReference type="GO" id="GO:0005829">
    <property type="term" value="C:cytosol"/>
    <property type="evidence" value="ECO:0007669"/>
    <property type="project" value="TreeGrafter"/>
</dbReference>
<dbReference type="GO" id="GO:0008813">
    <property type="term" value="F:chorismate lyase activity"/>
    <property type="evidence" value="ECO:0007669"/>
    <property type="project" value="UniProtKB-UniRule"/>
</dbReference>
<dbReference type="GO" id="GO:0042866">
    <property type="term" value="P:pyruvate biosynthetic process"/>
    <property type="evidence" value="ECO:0007669"/>
    <property type="project" value="UniProtKB-UniRule"/>
</dbReference>
<dbReference type="GO" id="GO:0006744">
    <property type="term" value="P:ubiquinone biosynthetic process"/>
    <property type="evidence" value="ECO:0007669"/>
    <property type="project" value="UniProtKB-UniRule"/>
</dbReference>
<dbReference type="Gene3D" id="3.40.1410.10">
    <property type="entry name" value="Chorismate lyase-like"/>
    <property type="match status" value="1"/>
</dbReference>
<dbReference type="HAMAP" id="MF_01632">
    <property type="entry name" value="UbiC"/>
    <property type="match status" value="1"/>
</dbReference>
<dbReference type="InterPro" id="IPR007440">
    <property type="entry name" value="Chorismate--pyruvate_lyase"/>
</dbReference>
<dbReference type="InterPro" id="IPR028978">
    <property type="entry name" value="Chorismate_lyase_/UTRA_dom_sf"/>
</dbReference>
<dbReference type="NCBIfam" id="NF008656">
    <property type="entry name" value="PRK11655.1"/>
    <property type="match status" value="1"/>
</dbReference>
<dbReference type="PANTHER" id="PTHR38683">
    <property type="entry name" value="CHORISMATE PYRUVATE-LYASE"/>
    <property type="match status" value="1"/>
</dbReference>
<dbReference type="PANTHER" id="PTHR38683:SF1">
    <property type="entry name" value="CHORISMATE PYRUVATE-LYASE"/>
    <property type="match status" value="1"/>
</dbReference>
<dbReference type="Pfam" id="PF04345">
    <property type="entry name" value="Chor_lyase"/>
    <property type="match status" value="1"/>
</dbReference>
<dbReference type="SUPFAM" id="SSF64288">
    <property type="entry name" value="Chorismate lyase-like"/>
    <property type="match status" value="1"/>
</dbReference>
<comment type="function">
    <text evidence="1">Removes the pyruvyl group from chorismate, with concomitant aromatization of the ring, to provide 4-hydroxybenzoate (4HB) for the ubiquinone pathway.</text>
</comment>
<comment type="catalytic activity">
    <reaction evidence="1">
        <text>chorismate = 4-hydroxybenzoate + pyruvate</text>
        <dbReference type="Rhea" id="RHEA:16505"/>
        <dbReference type="ChEBI" id="CHEBI:15361"/>
        <dbReference type="ChEBI" id="CHEBI:17879"/>
        <dbReference type="ChEBI" id="CHEBI:29748"/>
        <dbReference type="EC" id="4.1.3.40"/>
    </reaction>
</comment>
<comment type="pathway">
    <text evidence="1">Cofactor biosynthesis; ubiquinone biosynthesis.</text>
</comment>
<comment type="subunit">
    <text evidence="1">Monomer.</text>
</comment>
<comment type="subcellular location">
    <subcellularLocation>
        <location evidence="1">Cytoplasm</location>
    </subcellularLocation>
</comment>
<comment type="similarity">
    <text evidence="1">Belongs to the UbiC family.</text>
</comment>
<feature type="chain" id="PRO_1000215785" description="Chorismate pyruvate-lyase">
    <location>
        <begin position="1"/>
        <end position="177"/>
    </location>
</feature>
<feature type="binding site" evidence="1">
    <location>
        <position position="36"/>
    </location>
    <ligand>
        <name>substrate</name>
    </ligand>
</feature>
<feature type="binding site" evidence="1">
    <location>
        <position position="78"/>
    </location>
    <ligand>
        <name>substrate</name>
    </ligand>
</feature>
<feature type="binding site" evidence="1">
    <location>
        <position position="116"/>
    </location>
    <ligand>
        <name>substrate</name>
    </ligand>
</feature>
<feature type="binding site" evidence="1">
    <location>
        <position position="157"/>
    </location>
    <ligand>
        <name>substrate</name>
    </ligand>
</feature>
<name>UBIC_PECCP</name>
<evidence type="ECO:0000255" key="1">
    <source>
        <dbReference type="HAMAP-Rule" id="MF_01632"/>
    </source>
</evidence>